<name>SYL_BURVG</name>
<protein>
    <recommendedName>
        <fullName evidence="1">Leucine--tRNA ligase</fullName>
        <ecNumber evidence="1">6.1.1.4</ecNumber>
    </recommendedName>
    <alternativeName>
        <fullName evidence="1">Leucyl-tRNA synthetase</fullName>
        <shortName evidence="1">LeuRS</shortName>
    </alternativeName>
</protein>
<dbReference type="EC" id="6.1.1.4" evidence="1"/>
<dbReference type="EMBL" id="CP000614">
    <property type="protein sequence ID" value="ABO53634.1"/>
    <property type="molecule type" value="Genomic_DNA"/>
</dbReference>
<dbReference type="SMR" id="A4JBI1"/>
<dbReference type="KEGG" id="bvi:Bcep1808_0622"/>
<dbReference type="eggNOG" id="COG0495">
    <property type="taxonomic scope" value="Bacteria"/>
</dbReference>
<dbReference type="HOGENOM" id="CLU_004427_0_0_4"/>
<dbReference type="Proteomes" id="UP000002287">
    <property type="component" value="Chromosome 1"/>
</dbReference>
<dbReference type="GO" id="GO:0005829">
    <property type="term" value="C:cytosol"/>
    <property type="evidence" value="ECO:0007669"/>
    <property type="project" value="TreeGrafter"/>
</dbReference>
<dbReference type="GO" id="GO:0002161">
    <property type="term" value="F:aminoacyl-tRNA deacylase activity"/>
    <property type="evidence" value="ECO:0007669"/>
    <property type="project" value="InterPro"/>
</dbReference>
<dbReference type="GO" id="GO:0005524">
    <property type="term" value="F:ATP binding"/>
    <property type="evidence" value="ECO:0007669"/>
    <property type="project" value="UniProtKB-UniRule"/>
</dbReference>
<dbReference type="GO" id="GO:0004823">
    <property type="term" value="F:leucine-tRNA ligase activity"/>
    <property type="evidence" value="ECO:0007669"/>
    <property type="project" value="UniProtKB-UniRule"/>
</dbReference>
<dbReference type="GO" id="GO:0006429">
    <property type="term" value="P:leucyl-tRNA aminoacylation"/>
    <property type="evidence" value="ECO:0007669"/>
    <property type="project" value="UniProtKB-UniRule"/>
</dbReference>
<dbReference type="CDD" id="cd07958">
    <property type="entry name" value="Anticodon_Ia_Leu_BEm"/>
    <property type="match status" value="1"/>
</dbReference>
<dbReference type="CDD" id="cd00812">
    <property type="entry name" value="LeuRS_core"/>
    <property type="match status" value="1"/>
</dbReference>
<dbReference type="FunFam" id="1.10.730.10:FF:000002">
    <property type="entry name" value="Leucine--tRNA ligase"/>
    <property type="match status" value="1"/>
</dbReference>
<dbReference type="FunFam" id="2.20.28.290:FF:000001">
    <property type="entry name" value="Leucine--tRNA ligase"/>
    <property type="match status" value="1"/>
</dbReference>
<dbReference type="FunFam" id="3.40.50.620:FF:000003">
    <property type="entry name" value="Leucine--tRNA ligase"/>
    <property type="match status" value="1"/>
</dbReference>
<dbReference type="FunFam" id="3.40.50.620:FF:000056">
    <property type="entry name" value="Leucine--tRNA ligase"/>
    <property type="match status" value="1"/>
</dbReference>
<dbReference type="FunFam" id="3.90.740.10:FF:000012">
    <property type="entry name" value="Leucine--tRNA ligase"/>
    <property type="match status" value="1"/>
</dbReference>
<dbReference type="Gene3D" id="2.20.28.290">
    <property type="match status" value="1"/>
</dbReference>
<dbReference type="Gene3D" id="3.10.20.590">
    <property type="match status" value="1"/>
</dbReference>
<dbReference type="Gene3D" id="3.40.50.620">
    <property type="entry name" value="HUPs"/>
    <property type="match status" value="2"/>
</dbReference>
<dbReference type="Gene3D" id="1.10.730.10">
    <property type="entry name" value="Isoleucyl-tRNA Synthetase, Domain 1"/>
    <property type="match status" value="2"/>
</dbReference>
<dbReference type="Gene3D" id="3.90.740.10">
    <property type="entry name" value="Valyl/Leucyl/Isoleucyl-tRNA synthetase, editing domain"/>
    <property type="match status" value="1"/>
</dbReference>
<dbReference type="HAMAP" id="MF_00049_B">
    <property type="entry name" value="Leu_tRNA_synth_B"/>
    <property type="match status" value="1"/>
</dbReference>
<dbReference type="InterPro" id="IPR001412">
    <property type="entry name" value="aa-tRNA-synth_I_CS"/>
</dbReference>
<dbReference type="InterPro" id="IPR002300">
    <property type="entry name" value="aa-tRNA-synth_Ia"/>
</dbReference>
<dbReference type="InterPro" id="IPR002302">
    <property type="entry name" value="Leu-tRNA-ligase"/>
</dbReference>
<dbReference type="InterPro" id="IPR025709">
    <property type="entry name" value="Leu_tRNA-synth_edit"/>
</dbReference>
<dbReference type="InterPro" id="IPR013155">
    <property type="entry name" value="M/V/L/I-tRNA-synth_anticd-bd"/>
</dbReference>
<dbReference type="InterPro" id="IPR015413">
    <property type="entry name" value="Methionyl/Leucyl_tRNA_Synth"/>
</dbReference>
<dbReference type="InterPro" id="IPR014729">
    <property type="entry name" value="Rossmann-like_a/b/a_fold"/>
</dbReference>
<dbReference type="InterPro" id="IPR009080">
    <property type="entry name" value="tRNAsynth_Ia_anticodon-bd"/>
</dbReference>
<dbReference type="InterPro" id="IPR009008">
    <property type="entry name" value="Val/Leu/Ile-tRNA-synth_edit"/>
</dbReference>
<dbReference type="NCBIfam" id="TIGR00396">
    <property type="entry name" value="leuS_bact"/>
    <property type="match status" value="1"/>
</dbReference>
<dbReference type="PANTHER" id="PTHR43740:SF2">
    <property type="entry name" value="LEUCINE--TRNA LIGASE, MITOCHONDRIAL"/>
    <property type="match status" value="1"/>
</dbReference>
<dbReference type="PANTHER" id="PTHR43740">
    <property type="entry name" value="LEUCYL-TRNA SYNTHETASE"/>
    <property type="match status" value="1"/>
</dbReference>
<dbReference type="Pfam" id="PF08264">
    <property type="entry name" value="Anticodon_1"/>
    <property type="match status" value="1"/>
</dbReference>
<dbReference type="Pfam" id="PF00133">
    <property type="entry name" value="tRNA-synt_1"/>
    <property type="match status" value="2"/>
</dbReference>
<dbReference type="Pfam" id="PF13603">
    <property type="entry name" value="tRNA-synt_1_2"/>
    <property type="match status" value="1"/>
</dbReference>
<dbReference type="Pfam" id="PF09334">
    <property type="entry name" value="tRNA-synt_1g"/>
    <property type="match status" value="1"/>
</dbReference>
<dbReference type="PRINTS" id="PR00985">
    <property type="entry name" value="TRNASYNTHLEU"/>
</dbReference>
<dbReference type="SUPFAM" id="SSF47323">
    <property type="entry name" value="Anticodon-binding domain of a subclass of class I aminoacyl-tRNA synthetases"/>
    <property type="match status" value="1"/>
</dbReference>
<dbReference type="SUPFAM" id="SSF52374">
    <property type="entry name" value="Nucleotidylyl transferase"/>
    <property type="match status" value="1"/>
</dbReference>
<dbReference type="SUPFAM" id="SSF50677">
    <property type="entry name" value="ValRS/IleRS/LeuRS editing domain"/>
    <property type="match status" value="1"/>
</dbReference>
<dbReference type="PROSITE" id="PS00178">
    <property type="entry name" value="AA_TRNA_LIGASE_I"/>
    <property type="match status" value="1"/>
</dbReference>
<keyword id="KW-0030">Aminoacyl-tRNA synthetase</keyword>
<keyword id="KW-0067">ATP-binding</keyword>
<keyword id="KW-0963">Cytoplasm</keyword>
<keyword id="KW-0436">Ligase</keyword>
<keyword id="KW-0547">Nucleotide-binding</keyword>
<keyword id="KW-0648">Protein biosynthesis</keyword>
<reference key="1">
    <citation type="submission" date="2007-03" db="EMBL/GenBank/DDBJ databases">
        <title>Complete sequence of chromosome 1 of Burkholderia vietnamiensis G4.</title>
        <authorList>
            <consortium name="US DOE Joint Genome Institute"/>
            <person name="Copeland A."/>
            <person name="Lucas S."/>
            <person name="Lapidus A."/>
            <person name="Barry K."/>
            <person name="Detter J.C."/>
            <person name="Glavina del Rio T."/>
            <person name="Hammon N."/>
            <person name="Israni S."/>
            <person name="Dalin E."/>
            <person name="Tice H."/>
            <person name="Pitluck S."/>
            <person name="Chain P."/>
            <person name="Malfatti S."/>
            <person name="Shin M."/>
            <person name="Vergez L."/>
            <person name="Schmutz J."/>
            <person name="Larimer F."/>
            <person name="Land M."/>
            <person name="Hauser L."/>
            <person name="Kyrpides N."/>
            <person name="Tiedje J."/>
            <person name="Richardson P."/>
        </authorList>
    </citation>
    <scope>NUCLEOTIDE SEQUENCE [LARGE SCALE GENOMIC DNA]</scope>
    <source>
        <strain>G4 / LMG 22486</strain>
    </source>
</reference>
<proteinExistence type="inferred from homology"/>
<accession>A4JBI1</accession>
<sequence length="864" mass="95894">MHERYVPADVEAAAQGDWRAADAYKTKEDSQKPKFYCVSMLPYPSGKLHMGHVRNYTINDVMYRYLRMNGYNTLMPMGWDAFGMPAENAAMANGVPPAKWTYDNIDYMKGQMQSMGLAIDWSREIATCKPDYYKWNQWLFLKMLEKGIAYKKTGTVNWDPVDQTVLANEQVIDGRGWRSGALVEKREIPMYYLRITQYADELLNDLDGLGWPERVKIMQQNWIGKSFGVNFGFPYELDGEKALLRVFTTRADTIMGVTFCAIAAEHPLATRLAQGKPELQAFIDECKRGGVAEADVATMEKKGIATGFSVTHPLTGEAVEVWIGNYVLMSYGEGAVMGVPGHDERDFAFAKKYGLPIKQVIAAEGQTYSLDAWQEWYGDKDAAVCVNSGKYDGLRYTEAVDAVAADLKAGGFGDKQVTWRLRDWGVSRQRYWGTPIPIIHCPSCGDVPVPEQDLPVVLPEDLVPDGTGNPLAKSEAFLNCTCPKCGAAAKRETDTMDTFVDSSWYFSRYTAPDADTMVDARTDYWMPMDQYIGGIEHAILHLLYSRFWTKVMRDLGLVKFGEPAKNLLTQGMVLNETYYREDATGKKTWYNPADVTVTHDDKGRPVGATLNADGQPVVLGGIEKMSKSKNNGVDPQVLIDQYGADTARLFTMFAAPPEQQLEWSGAGVEGASRFLRRVWSFGAGNREALAARAGFDAASLGDADKALRREIYSVLKQADFDYQRLQYNTVVSAAMKMLNAIDGAKGATPGVLRETYGVLLRVLYPVVPHVTFELWKALGYADEFGPLLDAPWPKVDEAALEQAEIELVLQVNGKVRGALKVAKDATREAIEVAAVADEAFAKFSDGKPAKKIVVVPGRLVNIVV</sequence>
<evidence type="ECO:0000255" key="1">
    <source>
        <dbReference type="HAMAP-Rule" id="MF_00049"/>
    </source>
</evidence>
<comment type="catalytic activity">
    <reaction evidence="1">
        <text>tRNA(Leu) + L-leucine + ATP = L-leucyl-tRNA(Leu) + AMP + diphosphate</text>
        <dbReference type="Rhea" id="RHEA:11688"/>
        <dbReference type="Rhea" id="RHEA-COMP:9613"/>
        <dbReference type="Rhea" id="RHEA-COMP:9622"/>
        <dbReference type="ChEBI" id="CHEBI:30616"/>
        <dbReference type="ChEBI" id="CHEBI:33019"/>
        <dbReference type="ChEBI" id="CHEBI:57427"/>
        <dbReference type="ChEBI" id="CHEBI:78442"/>
        <dbReference type="ChEBI" id="CHEBI:78494"/>
        <dbReference type="ChEBI" id="CHEBI:456215"/>
        <dbReference type="EC" id="6.1.1.4"/>
    </reaction>
</comment>
<comment type="subcellular location">
    <subcellularLocation>
        <location evidence="1">Cytoplasm</location>
    </subcellularLocation>
</comment>
<comment type="similarity">
    <text evidence="1">Belongs to the class-I aminoacyl-tRNA synthetase family.</text>
</comment>
<organism>
    <name type="scientific">Burkholderia vietnamiensis (strain G4 / LMG 22486)</name>
    <name type="common">Burkholderia cepacia (strain R1808)</name>
    <dbReference type="NCBI Taxonomy" id="269482"/>
    <lineage>
        <taxon>Bacteria</taxon>
        <taxon>Pseudomonadati</taxon>
        <taxon>Pseudomonadota</taxon>
        <taxon>Betaproteobacteria</taxon>
        <taxon>Burkholderiales</taxon>
        <taxon>Burkholderiaceae</taxon>
        <taxon>Burkholderia</taxon>
        <taxon>Burkholderia cepacia complex</taxon>
    </lineage>
</organism>
<feature type="chain" id="PRO_1000009313" description="Leucine--tRNA ligase">
    <location>
        <begin position="1"/>
        <end position="864"/>
    </location>
</feature>
<feature type="short sequence motif" description="'HIGH' region">
    <location>
        <begin position="42"/>
        <end position="52"/>
    </location>
</feature>
<feature type="short sequence motif" description="'KMSKS' region">
    <location>
        <begin position="624"/>
        <end position="628"/>
    </location>
</feature>
<feature type="binding site" evidence="1">
    <location>
        <position position="627"/>
    </location>
    <ligand>
        <name>ATP</name>
        <dbReference type="ChEBI" id="CHEBI:30616"/>
    </ligand>
</feature>
<gene>
    <name evidence="1" type="primary">leuS</name>
    <name type="ordered locus">Bcep1808_0622</name>
</gene>